<gene>
    <name evidence="1" type="primary">nusB</name>
    <name type="ordered locus">HP_0001</name>
</gene>
<organism>
    <name type="scientific">Helicobacter pylori (strain ATCC 700392 / 26695)</name>
    <name type="common">Campylobacter pylori</name>
    <dbReference type="NCBI Taxonomy" id="85962"/>
    <lineage>
        <taxon>Bacteria</taxon>
        <taxon>Pseudomonadati</taxon>
        <taxon>Campylobacterota</taxon>
        <taxon>Epsilonproteobacteria</taxon>
        <taxon>Campylobacterales</taxon>
        <taxon>Helicobacteraceae</taxon>
        <taxon>Helicobacter</taxon>
    </lineage>
</organism>
<name>NUSB_HELPY</name>
<sequence>MATRTQARGAVVELLYAFESGNEEIKKIASSMLEEKKIKNNQLAFALSLFNGVLEKINEIDALIEPHLKDWDFKRLGSMEKAILRLGAYEIGFTPTQNPIIINECIELGKLYAEPNTPKFLNAILDSLSKKLTQKPLN</sequence>
<evidence type="ECO:0000255" key="1">
    <source>
        <dbReference type="HAMAP-Rule" id="MF_00073"/>
    </source>
</evidence>
<evidence type="ECO:0000305" key="2"/>
<proteinExistence type="inferred from homology"/>
<dbReference type="EMBL" id="AE000511">
    <property type="protein sequence ID" value="AAD07074.1"/>
    <property type="molecule type" value="Genomic_DNA"/>
</dbReference>
<dbReference type="PIR" id="A64520">
    <property type="entry name" value="A64520"/>
</dbReference>
<dbReference type="RefSeq" id="NP_206803.1">
    <property type="nucleotide sequence ID" value="NC_000915.1"/>
</dbReference>
<dbReference type="RefSeq" id="WP_000235740.1">
    <property type="nucleotide sequence ID" value="NC_018939.1"/>
</dbReference>
<dbReference type="SMR" id="O24853"/>
<dbReference type="DIP" id="DIP-3047N"/>
<dbReference type="FunCoup" id="O24853">
    <property type="interactions" value="270"/>
</dbReference>
<dbReference type="IntAct" id="O24853">
    <property type="interactions" value="8"/>
</dbReference>
<dbReference type="MINT" id="O24853"/>
<dbReference type="STRING" id="85962.HP_0001"/>
<dbReference type="PaxDb" id="85962-C694_00005"/>
<dbReference type="EnsemblBacteria" id="AAD07074">
    <property type="protein sequence ID" value="AAD07074"/>
    <property type="gene ID" value="HP_0001"/>
</dbReference>
<dbReference type="KEGG" id="heo:C694_00005"/>
<dbReference type="KEGG" id="hpy:HP_0001"/>
<dbReference type="PATRIC" id="fig|85962.47.peg.1"/>
<dbReference type="eggNOG" id="COG0781">
    <property type="taxonomic scope" value="Bacteria"/>
</dbReference>
<dbReference type="InParanoid" id="O24853"/>
<dbReference type="OrthoDB" id="9797817at2"/>
<dbReference type="PhylomeDB" id="O24853"/>
<dbReference type="Proteomes" id="UP000000429">
    <property type="component" value="Chromosome"/>
</dbReference>
<dbReference type="GO" id="GO:0005829">
    <property type="term" value="C:cytosol"/>
    <property type="evidence" value="ECO:0000318"/>
    <property type="project" value="GO_Central"/>
</dbReference>
<dbReference type="GO" id="GO:0003723">
    <property type="term" value="F:RNA binding"/>
    <property type="evidence" value="ECO:0007669"/>
    <property type="project" value="UniProtKB-UniRule"/>
</dbReference>
<dbReference type="GO" id="GO:0006353">
    <property type="term" value="P:DNA-templated transcription termination"/>
    <property type="evidence" value="ECO:0007669"/>
    <property type="project" value="UniProtKB-UniRule"/>
</dbReference>
<dbReference type="GO" id="GO:0031564">
    <property type="term" value="P:transcription antitermination"/>
    <property type="evidence" value="ECO:0007669"/>
    <property type="project" value="UniProtKB-KW"/>
</dbReference>
<dbReference type="CDD" id="cd00619">
    <property type="entry name" value="Terminator_NusB"/>
    <property type="match status" value="1"/>
</dbReference>
<dbReference type="FunFam" id="1.10.940.10:FF:000004">
    <property type="entry name" value="Transcription antitermination protein NusB"/>
    <property type="match status" value="1"/>
</dbReference>
<dbReference type="Gene3D" id="1.10.940.10">
    <property type="entry name" value="NusB-like"/>
    <property type="match status" value="1"/>
</dbReference>
<dbReference type="HAMAP" id="MF_00073">
    <property type="entry name" value="NusB"/>
    <property type="match status" value="1"/>
</dbReference>
<dbReference type="InterPro" id="IPR035926">
    <property type="entry name" value="NusB-like_sf"/>
</dbReference>
<dbReference type="InterPro" id="IPR011605">
    <property type="entry name" value="NusB_fam"/>
</dbReference>
<dbReference type="InterPro" id="IPR006027">
    <property type="entry name" value="NusB_RsmB_TIM44"/>
</dbReference>
<dbReference type="NCBIfam" id="TIGR01951">
    <property type="entry name" value="nusB"/>
    <property type="match status" value="1"/>
</dbReference>
<dbReference type="PANTHER" id="PTHR11078:SF3">
    <property type="entry name" value="ANTITERMINATION NUSB DOMAIN-CONTAINING PROTEIN"/>
    <property type="match status" value="1"/>
</dbReference>
<dbReference type="PANTHER" id="PTHR11078">
    <property type="entry name" value="N UTILIZATION SUBSTANCE PROTEIN B-RELATED"/>
    <property type="match status" value="1"/>
</dbReference>
<dbReference type="Pfam" id="PF01029">
    <property type="entry name" value="NusB"/>
    <property type="match status" value="1"/>
</dbReference>
<dbReference type="SUPFAM" id="SSF48013">
    <property type="entry name" value="NusB-like"/>
    <property type="match status" value="1"/>
</dbReference>
<feature type="chain" id="PRO_0000176545" description="Transcription antitermination protein NusB">
    <location>
        <begin position="1"/>
        <end position="138"/>
    </location>
</feature>
<reference key="1">
    <citation type="journal article" date="1997" name="Nature">
        <title>The complete genome sequence of the gastric pathogen Helicobacter pylori.</title>
        <authorList>
            <person name="Tomb J.-F."/>
            <person name="White O."/>
            <person name="Kerlavage A.R."/>
            <person name="Clayton R.A."/>
            <person name="Sutton G.G."/>
            <person name="Fleischmann R.D."/>
            <person name="Ketchum K.A."/>
            <person name="Klenk H.-P."/>
            <person name="Gill S.R."/>
            <person name="Dougherty B.A."/>
            <person name="Nelson K.E."/>
            <person name="Quackenbush J."/>
            <person name="Zhou L."/>
            <person name="Kirkness E.F."/>
            <person name="Peterson S.N."/>
            <person name="Loftus B.J."/>
            <person name="Richardson D.L."/>
            <person name="Dodson R.J."/>
            <person name="Khalak H.G."/>
            <person name="Glodek A."/>
            <person name="McKenney K."/>
            <person name="FitzGerald L.M."/>
            <person name="Lee N."/>
            <person name="Adams M.D."/>
            <person name="Hickey E.K."/>
            <person name="Berg D.E."/>
            <person name="Gocayne J.D."/>
            <person name="Utterback T.R."/>
            <person name="Peterson J.D."/>
            <person name="Kelley J.M."/>
            <person name="Cotton M.D."/>
            <person name="Weidman J.F."/>
            <person name="Fujii C."/>
            <person name="Bowman C."/>
            <person name="Watthey L."/>
            <person name="Wallin E."/>
            <person name="Hayes W.S."/>
            <person name="Borodovsky M."/>
            <person name="Karp P.D."/>
            <person name="Smith H.O."/>
            <person name="Fraser C.M."/>
            <person name="Venter J.C."/>
        </authorList>
    </citation>
    <scope>NUCLEOTIDE SEQUENCE [LARGE SCALE GENOMIC DNA]</scope>
    <source>
        <strain>ATCC 700392 / 26695</strain>
    </source>
</reference>
<accession>O24853</accession>
<comment type="function">
    <text evidence="1">Involved in transcription antitermination. Required for transcription of ribosomal RNA (rRNA) genes. Binds specifically to the boxA antiterminator sequence of the ribosomal RNA (rrn) operons.</text>
</comment>
<comment type="similarity">
    <text evidence="1 2">Belongs to the NusB family.</text>
</comment>
<protein>
    <recommendedName>
        <fullName evidence="1">Transcription antitermination protein NusB</fullName>
    </recommendedName>
    <alternativeName>
        <fullName evidence="1">Antitermination factor NusB</fullName>
    </alternativeName>
</protein>
<keyword id="KW-1185">Reference proteome</keyword>
<keyword id="KW-0694">RNA-binding</keyword>
<keyword id="KW-0804">Transcription</keyword>
<keyword id="KW-0889">Transcription antitermination</keyword>
<keyword id="KW-0805">Transcription regulation</keyword>